<protein>
    <recommendedName>
        <fullName>Conotoxin Bu4</fullName>
    </recommendedName>
</protein>
<feature type="signal peptide" evidence="2">
    <location>
        <begin position="1"/>
        <end position="22"/>
    </location>
</feature>
<feature type="propeptide" id="PRO_0000409941" evidence="3">
    <location>
        <begin position="23"/>
        <end position="45"/>
    </location>
</feature>
<feature type="peptide" id="PRO_0000409942" description="Conotoxin Bu4">
    <location>
        <begin position="46"/>
        <end position="74"/>
    </location>
</feature>
<feature type="disulfide bond" evidence="1">
    <location>
        <begin position="47"/>
        <end position="63"/>
    </location>
</feature>
<feature type="disulfide bond" evidence="1">
    <location>
        <begin position="54"/>
        <end position="66"/>
    </location>
</feature>
<feature type="disulfide bond" evidence="1">
    <location>
        <begin position="62"/>
        <end position="73"/>
    </location>
</feature>
<comment type="subcellular location">
    <subcellularLocation>
        <location evidence="1">Secreted</location>
    </subcellularLocation>
</comment>
<comment type="tissue specificity">
    <text>Expressed by the venom duct.</text>
</comment>
<comment type="domain">
    <text>The presence of a 'disulfide through disulfide knot' structurally defines this protein as a knottin.</text>
</comment>
<comment type="domain">
    <text>The cysteine framework is VI/VII (C-C-CC-C-C).</text>
</comment>
<comment type="similarity">
    <text evidence="3">Belongs to the conotoxin O1 superfamily.</text>
</comment>
<keyword id="KW-1015">Disulfide bond</keyword>
<keyword id="KW-0872">Ion channel impairing toxin</keyword>
<keyword id="KW-0960">Knottin</keyword>
<keyword id="KW-0528">Neurotoxin</keyword>
<keyword id="KW-0964">Secreted</keyword>
<keyword id="KW-0732">Signal</keyword>
<keyword id="KW-0800">Toxin</keyword>
<dbReference type="SMR" id="P0CY63"/>
<dbReference type="GO" id="GO:0005576">
    <property type="term" value="C:extracellular region"/>
    <property type="evidence" value="ECO:0007669"/>
    <property type="project" value="UniProtKB-SubCell"/>
</dbReference>
<dbReference type="GO" id="GO:0008200">
    <property type="term" value="F:ion channel inhibitor activity"/>
    <property type="evidence" value="ECO:0007669"/>
    <property type="project" value="InterPro"/>
</dbReference>
<dbReference type="GO" id="GO:0090729">
    <property type="term" value="F:toxin activity"/>
    <property type="evidence" value="ECO:0007669"/>
    <property type="project" value="UniProtKB-KW"/>
</dbReference>
<dbReference type="InterPro" id="IPR004214">
    <property type="entry name" value="Conotoxin"/>
</dbReference>
<dbReference type="Pfam" id="PF02950">
    <property type="entry name" value="Conotoxin"/>
    <property type="match status" value="1"/>
</dbReference>
<accession>P0CY63</accession>
<sequence>MKLTCVVIVAVLLLTACQLIIAEDSRGTQLHRALRKATKLSVSTRTCVMFGSMCDKEEHSICCYECDYKKGICV</sequence>
<evidence type="ECO:0000250" key="1"/>
<evidence type="ECO:0000255" key="2"/>
<evidence type="ECO:0000305" key="3"/>
<name>O164_CONBU</name>
<proteinExistence type="evidence at transcript level"/>
<organism>
    <name type="scientific">Conus bullatus</name>
    <name type="common">Bubble cone</name>
    <dbReference type="NCBI Taxonomy" id="89438"/>
    <lineage>
        <taxon>Eukaryota</taxon>
        <taxon>Metazoa</taxon>
        <taxon>Spiralia</taxon>
        <taxon>Lophotrochozoa</taxon>
        <taxon>Mollusca</taxon>
        <taxon>Gastropoda</taxon>
        <taxon>Caenogastropoda</taxon>
        <taxon>Neogastropoda</taxon>
        <taxon>Conoidea</taxon>
        <taxon>Conidae</taxon>
        <taxon>Conus</taxon>
        <taxon>Textilia</taxon>
    </lineage>
</organism>
<reference key="1">
    <citation type="journal article" date="2011" name="BMC Genomics">
        <title>Characterization of the Conus bullatus genome and its venom-duct transcriptome.</title>
        <authorList>
            <person name="Hu H."/>
            <person name="Bandyopadhyay P.K."/>
            <person name="Olivera B.M."/>
            <person name="Yandell M."/>
        </authorList>
    </citation>
    <scope>NUCLEOTIDE SEQUENCE [MRNA]</scope>
    <source>
        <tissue>Venom duct</tissue>
    </source>
</reference>